<reference key="1">
    <citation type="journal article" date="2003" name="Plant Mol. Biol.">
        <title>Jasmonate biosynthesis and the allene oxide cyclase family of Arabidopsis thaliana.</title>
        <authorList>
            <person name="Stenzel I."/>
            <person name="Hause B."/>
            <person name="Miersch O."/>
            <person name="Kurz T."/>
            <person name="Maucher H."/>
            <person name="Weichart H."/>
            <person name="Ziegler J."/>
            <person name="Feussner I."/>
            <person name="Wasternack C."/>
        </authorList>
    </citation>
    <scope>NUCLEOTIDE SEQUENCE [MRNA]</scope>
    <scope>TISSUE SPECIFICITY</scope>
    <scope>SUBCELLULAR LOCATION</scope>
    <scope>INDUCTION</scope>
    <source>
        <strain>cv. Columbia</strain>
        <tissue>Leaf</tissue>
    </source>
</reference>
<reference key="2">
    <citation type="journal article" date="2000" name="DNA Res.">
        <title>Structural analysis of Arabidopsis thaliana chromosome 3. I. Sequence features of the regions of 4,504,864 bp covered by sixty P1 and TAC clones.</title>
        <authorList>
            <person name="Sato S."/>
            <person name="Nakamura Y."/>
            <person name="Kaneko T."/>
            <person name="Katoh T."/>
            <person name="Asamizu E."/>
            <person name="Tabata S."/>
        </authorList>
    </citation>
    <scope>NUCLEOTIDE SEQUENCE [LARGE SCALE GENOMIC DNA]</scope>
    <source>
        <strain>cv. Columbia</strain>
    </source>
</reference>
<reference key="3">
    <citation type="journal article" date="2017" name="Plant J.">
        <title>Araport11: a complete reannotation of the Arabidopsis thaliana reference genome.</title>
        <authorList>
            <person name="Cheng C.Y."/>
            <person name="Krishnakumar V."/>
            <person name="Chan A.P."/>
            <person name="Thibaud-Nissen F."/>
            <person name="Schobel S."/>
            <person name="Town C.D."/>
        </authorList>
    </citation>
    <scope>GENOME REANNOTATION</scope>
    <source>
        <strain>cv. Columbia</strain>
    </source>
</reference>
<reference key="4">
    <citation type="journal article" date="2003" name="Science">
        <title>Empirical analysis of transcriptional activity in the Arabidopsis genome.</title>
        <authorList>
            <person name="Yamada K."/>
            <person name="Lim J."/>
            <person name="Dale J.M."/>
            <person name="Chen H."/>
            <person name="Shinn P."/>
            <person name="Palm C.J."/>
            <person name="Southwick A.M."/>
            <person name="Wu H.C."/>
            <person name="Kim C.J."/>
            <person name="Nguyen M."/>
            <person name="Pham P.K."/>
            <person name="Cheuk R.F."/>
            <person name="Karlin-Newmann G."/>
            <person name="Liu S.X."/>
            <person name="Lam B."/>
            <person name="Sakano H."/>
            <person name="Wu T."/>
            <person name="Yu G."/>
            <person name="Miranda M."/>
            <person name="Quach H.L."/>
            <person name="Tripp M."/>
            <person name="Chang C.H."/>
            <person name="Lee J.M."/>
            <person name="Toriumi M.J."/>
            <person name="Chan M.M."/>
            <person name="Tang C.C."/>
            <person name="Onodera C.S."/>
            <person name="Deng J.M."/>
            <person name="Akiyama K."/>
            <person name="Ansari Y."/>
            <person name="Arakawa T."/>
            <person name="Banh J."/>
            <person name="Banno F."/>
            <person name="Bowser L."/>
            <person name="Brooks S.Y."/>
            <person name="Carninci P."/>
            <person name="Chao Q."/>
            <person name="Choy N."/>
            <person name="Enju A."/>
            <person name="Goldsmith A.D."/>
            <person name="Gurjal M."/>
            <person name="Hansen N.F."/>
            <person name="Hayashizaki Y."/>
            <person name="Johnson-Hopson C."/>
            <person name="Hsuan V.W."/>
            <person name="Iida K."/>
            <person name="Karnes M."/>
            <person name="Khan S."/>
            <person name="Koesema E."/>
            <person name="Ishida J."/>
            <person name="Jiang P.X."/>
            <person name="Jones T."/>
            <person name="Kawai J."/>
            <person name="Kamiya A."/>
            <person name="Meyers C."/>
            <person name="Nakajima M."/>
            <person name="Narusaka M."/>
            <person name="Seki M."/>
            <person name="Sakurai T."/>
            <person name="Satou M."/>
            <person name="Tamse R."/>
            <person name="Vaysberg M."/>
            <person name="Wallender E.K."/>
            <person name="Wong C."/>
            <person name="Yamamura Y."/>
            <person name="Yuan S."/>
            <person name="Shinozaki K."/>
            <person name="Davis R.W."/>
            <person name="Theologis A."/>
            <person name="Ecker J.R."/>
        </authorList>
    </citation>
    <scope>NUCLEOTIDE SEQUENCE [LARGE SCALE MRNA]</scope>
    <source>
        <strain>cv. Columbia</strain>
    </source>
</reference>
<reference key="5">
    <citation type="submission" date="2005-04" db="PDB data bank">
        <title>X-ray structure of allene oxide cyclase from Arabidopsis thaliana At3g25770.</title>
        <authorList>
            <consortium name="Center for eukaryotic structural genomics (CESG)"/>
        </authorList>
    </citation>
    <scope>X-RAY CRYSTALLOGRAPHY (1.71 ANGSTROMS) OF 62-253</scope>
</reference>
<feature type="transit peptide" description="Chloroplast" evidence="1">
    <location>
        <begin position="1"/>
        <end position="77"/>
    </location>
</feature>
<feature type="chain" id="PRO_0000001703" description="Allene oxide cyclase 2, chloroplastic">
    <location>
        <begin position="78"/>
        <end position="253"/>
    </location>
</feature>
<feature type="strand" evidence="4">
    <location>
        <begin position="82"/>
        <end position="89"/>
    </location>
</feature>
<feature type="strand" evidence="4">
    <location>
        <begin position="104"/>
        <end position="108"/>
    </location>
</feature>
<feature type="strand" evidence="4">
    <location>
        <begin position="113"/>
        <end position="116"/>
    </location>
</feature>
<feature type="strand" evidence="4">
    <location>
        <begin position="119"/>
        <end position="122"/>
    </location>
</feature>
<feature type="strand" evidence="4">
    <location>
        <begin position="128"/>
        <end position="142"/>
    </location>
</feature>
<feature type="helix" evidence="4">
    <location>
        <begin position="143"/>
        <end position="145"/>
    </location>
</feature>
<feature type="strand" evidence="4">
    <location>
        <begin position="147"/>
        <end position="157"/>
    </location>
</feature>
<feature type="helix" evidence="4">
    <location>
        <begin position="159"/>
        <end position="161"/>
    </location>
</feature>
<feature type="strand" evidence="4">
    <location>
        <begin position="162"/>
        <end position="171"/>
    </location>
</feature>
<feature type="strand" evidence="4">
    <location>
        <begin position="176"/>
        <end position="185"/>
    </location>
</feature>
<feature type="turn" evidence="4">
    <location>
        <begin position="186"/>
        <end position="189"/>
    </location>
</feature>
<feature type="strand" evidence="4">
    <location>
        <begin position="191"/>
        <end position="200"/>
    </location>
</feature>
<feature type="turn" evidence="4">
    <location>
        <begin position="201"/>
        <end position="203"/>
    </location>
</feature>
<feature type="strand" evidence="4">
    <location>
        <begin position="204"/>
        <end position="212"/>
    </location>
</feature>
<feature type="helix" evidence="4">
    <location>
        <begin position="220"/>
        <end position="222"/>
    </location>
</feature>
<feature type="helix" evidence="4">
    <location>
        <begin position="237"/>
        <end position="240"/>
    </location>
</feature>
<feature type="helix" evidence="4">
    <location>
        <begin position="244"/>
        <end position="246"/>
    </location>
</feature>
<sequence length="253" mass="27635">MASSAVSLQSISMTTLNNLSCNQQFHRSSLLGSSKSFQNLGISSNGSDFSYPSSFTAKKNLTASRALSQNGNIENPRPSKVQELSVYEINELDRHSPKILKNAFSLMFGLGDLVPFTNKLYTGDLKKRVGITAGLCVVIEHVPEKKGERFEATYSFYFGDYGHLSVQGPYLTYEDSFLAITGGAGIFEGAYGQVKLQQLVYPTKLFYTFYLKGLANDLPLELTGTPVPPSKDIEPAPEAKALEPSGVISNYTN</sequence>
<proteinExistence type="evidence at protein level"/>
<name>AOC2_ARATH</name>
<protein>
    <recommendedName>
        <fullName>Allene oxide cyclase 2, chloroplastic</fullName>
        <ecNumber>5.3.99.6</ecNumber>
    </recommendedName>
</protein>
<gene>
    <name type="primary">AOC2</name>
    <name type="ordered locus">At3g25770</name>
    <name type="ORF">K13N2.11</name>
    <name type="ORF">K13N2_9</name>
</gene>
<keyword id="KW-0002">3D-structure</keyword>
<keyword id="KW-0150">Chloroplast</keyword>
<keyword id="KW-0413">Isomerase</keyword>
<keyword id="KW-0934">Plastid</keyword>
<keyword id="KW-1185">Reference proteome</keyword>
<keyword id="KW-0809">Transit peptide</keyword>
<dbReference type="EC" id="5.3.99.6"/>
<dbReference type="EMBL" id="AJ308484">
    <property type="protein sequence ID" value="CAC83762.1"/>
    <property type="molecule type" value="mRNA"/>
</dbReference>
<dbReference type="EMBL" id="AB028607">
    <property type="protein sequence ID" value="BAA95764.1"/>
    <property type="molecule type" value="Genomic_DNA"/>
</dbReference>
<dbReference type="EMBL" id="CP002686">
    <property type="protein sequence ID" value="AEE77066.1"/>
    <property type="molecule type" value="Genomic_DNA"/>
</dbReference>
<dbReference type="EMBL" id="AY054131">
    <property type="protein sequence ID" value="AAL06792.1"/>
    <property type="molecule type" value="mRNA"/>
</dbReference>
<dbReference type="EMBL" id="AF380630">
    <property type="protein sequence ID" value="AAK55711.1"/>
    <property type="molecule type" value="mRNA"/>
</dbReference>
<dbReference type="RefSeq" id="NP_566776.1">
    <property type="nucleotide sequence ID" value="NM_113476.4"/>
</dbReference>
<dbReference type="PDB" id="1Z8K">
    <property type="method" value="X-ray"/>
    <property type="resolution" value="1.71 A"/>
    <property type="chains" value="A/B/C=62-253"/>
</dbReference>
<dbReference type="PDB" id="2BRJ">
    <property type="method" value="X-ray"/>
    <property type="resolution" value="1.50 A"/>
    <property type="chains" value="A/B/C=78-253"/>
</dbReference>
<dbReference type="PDB" id="2DIO">
    <property type="method" value="X-ray"/>
    <property type="resolution" value="1.70 A"/>
    <property type="chains" value="A/B/C=78-253"/>
</dbReference>
<dbReference type="PDB" id="2GIN">
    <property type="method" value="X-ray"/>
    <property type="resolution" value="1.80 A"/>
    <property type="chains" value="A/B/C/D/E/F=78-253"/>
</dbReference>
<dbReference type="PDB" id="2Q4I">
    <property type="method" value="X-ray"/>
    <property type="resolution" value="1.71 A"/>
    <property type="chains" value="A/B/C=62-253"/>
</dbReference>
<dbReference type="PDB" id="4CQ6">
    <property type="method" value="X-ray"/>
    <property type="resolution" value="1.80 A"/>
    <property type="chains" value="A/B/C=78-253"/>
</dbReference>
<dbReference type="PDB" id="4CQ7">
    <property type="method" value="X-ray"/>
    <property type="resolution" value="1.70 A"/>
    <property type="chains" value="A/B/C=78-253"/>
</dbReference>
<dbReference type="PDBsum" id="1Z8K"/>
<dbReference type="PDBsum" id="2BRJ"/>
<dbReference type="PDBsum" id="2DIO"/>
<dbReference type="PDBsum" id="2GIN"/>
<dbReference type="PDBsum" id="2Q4I"/>
<dbReference type="PDBsum" id="4CQ6"/>
<dbReference type="PDBsum" id="4CQ7"/>
<dbReference type="SMR" id="Q9LS02"/>
<dbReference type="FunCoup" id="Q9LS02">
    <property type="interactions" value="264"/>
</dbReference>
<dbReference type="STRING" id="3702.Q9LS02"/>
<dbReference type="iPTMnet" id="Q9LS02"/>
<dbReference type="PaxDb" id="3702-AT3G25770.1"/>
<dbReference type="ProteomicsDB" id="245005"/>
<dbReference type="DNASU" id="822168"/>
<dbReference type="EnsemblPlants" id="AT3G25770.1">
    <property type="protein sequence ID" value="AT3G25770.1"/>
    <property type="gene ID" value="AT3G25770"/>
</dbReference>
<dbReference type="GeneID" id="822168"/>
<dbReference type="Gramene" id="AT3G25770.1">
    <property type="protein sequence ID" value="AT3G25770.1"/>
    <property type="gene ID" value="AT3G25770"/>
</dbReference>
<dbReference type="KEGG" id="ath:AT3G25770"/>
<dbReference type="Araport" id="AT3G25770"/>
<dbReference type="TAIR" id="AT3G25770">
    <property type="gene designation" value="AOC2"/>
</dbReference>
<dbReference type="eggNOG" id="ENOG502QPP8">
    <property type="taxonomic scope" value="Eukaryota"/>
</dbReference>
<dbReference type="HOGENOM" id="CLU_069000_0_0_1"/>
<dbReference type="InParanoid" id="Q9LS02"/>
<dbReference type="OMA" id="SVQGPYM"/>
<dbReference type="PhylomeDB" id="Q9LS02"/>
<dbReference type="BioCyc" id="ARA:AT3G25770-MONOMER"/>
<dbReference type="BioCyc" id="MetaCyc:AT3G25770-MONOMER"/>
<dbReference type="BRENDA" id="5.3.99.6">
    <property type="organism ID" value="399"/>
</dbReference>
<dbReference type="EvolutionaryTrace" id="Q9LS02"/>
<dbReference type="PRO" id="PR:Q9LS02"/>
<dbReference type="Proteomes" id="UP000006548">
    <property type="component" value="Chromosome 3"/>
</dbReference>
<dbReference type="ExpressionAtlas" id="Q9LS02">
    <property type="expression patterns" value="baseline and differential"/>
</dbReference>
<dbReference type="GO" id="GO:0009507">
    <property type="term" value="C:chloroplast"/>
    <property type="evidence" value="ECO:0007005"/>
    <property type="project" value="TAIR"/>
</dbReference>
<dbReference type="GO" id="GO:0009941">
    <property type="term" value="C:chloroplast envelope"/>
    <property type="evidence" value="ECO:0007005"/>
    <property type="project" value="TAIR"/>
</dbReference>
<dbReference type="GO" id="GO:0009570">
    <property type="term" value="C:chloroplast stroma"/>
    <property type="evidence" value="ECO:0007005"/>
    <property type="project" value="TAIR"/>
</dbReference>
<dbReference type="GO" id="GO:0009535">
    <property type="term" value="C:chloroplast thylakoid membrane"/>
    <property type="evidence" value="ECO:0007005"/>
    <property type="project" value="TAIR"/>
</dbReference>
<dbReference type="GO" id="GO:0005829">
    <property type="term" value="C:cytosol"/>
    <property type="evidence" value="ECO:0007005"/>
    <property type="project" value="TAIR"/>
</dbReference>
<dbReference type="GO" id="GO:0010319">
    <property type="term" value="C:stromule"/>
    <property type="evidence" value="ECO:0000314"/>
    <property type="project" value="TAIR"/>
</dbReference>
<dbReference type="GO" id="GO:0046423">
    <property type="term" value="F:allene-oxide cyclase activity"/>
    <property type="evidence" value="ECO:0000314"/>
    <property type="project" value="TAIR"/>
</dbReference>
<dbReference type="GO" id="GO:0009695">
    <property type="term" value="P:jasmonic acid biosynthetic process"/>
    <property type="evidence" value="ECO:0000304"/>
    <property type="project" value="TAIR"/>
</dbReference>
<dbReference type="GO" id="GO:0009409">
    <property type="term" value="P:response to cold"/>
    <property type="evidence" value="ECO:0000270"/>
    <property type="project" value="TAIR"/>
</dbReference>
<dbReference type="FunFam" id="2.40.480.10:FF:000001">
    <property type="entry name" value="Allene oxide cyclase, chloroplastic"/>
    <property type="match status" value="1"/>
</dbReference>
<dbReference type="Gene3D" id="2.40.480.10">
    <property type="entry name" value="Allene oxide cyclase-like"/>
    <property type="match status" value="1"/>
</dbReference>
<dbReference type="InterPro" id="IPR009410">
    <property type="entry name" value="Allene_ox_cyc"/>
</dbReference>
<dbReference type="InterPro" id="IPR044859">
    <property type="entry name" value="Allene_oxi_cyc_Dirigent"/>
</dbReference>
<dbReference type="InterPro" id="IPR034871">
    <property type="entry name" value="Allene_oxi_cyc_sf"/>
</dbReference>
<dbReference type="PANTHER" id="PTHR31843:SF9">
    <property type="entry name" value="ALLENE OXIDE CYCLASE 1, CHLOROPLASTIC-RELATED"/>
    <property type="match status" value="1"/>
</dbReference>
<dbReference type="PANTHER" id="PTHR31843">
    <property type="entry name" value="ALLENE OXIDE CYCLASE 4, CHLOROPLASTIC"/>
    <property type="match status" value="1"/>
</dbReference>
<dbReference type="Pfam" id="PF06351">
    <property type="entry name" value="Allene_ox_cyc"/>
    <property type="match status" value="1"/>
</dbReference>
<dbReference type="SUPFAM" id="SSF141493">
    <property type="entry name" value="Allene oxide cyclase-like"/>
    <property type="match status" value="1"/>
</dbReference>
<organism>
    <name type="scientific">Arabidopsis thaliana</name>
    <name type="common">Mouse-ear cress</name>
    <dbReference type="NCBI Taxonomy" id="3702"/>
    <lineage>
        <taxon>Eukaryota</taxon>
        <taxon>Viridiplantae</taxon>
        <taxon>Streptophyta</taxon>
        <taxon>Embryophyta</taxon>
        <taxon>Tracheophyta</taxon>
        <taxon>Spermatophyta</taxon>
        <taxon>Magnoliopsida</taxon>
        <taxon>eudicotyledons</taxon>
        <taxon>Gunneridae</taxon>
        <taxon>Pentapetalae</taxon>
        <taxon>rosids</taxon>
        <taxon>malvids</taxon>
        <taxon>Brassicales</taxon>
        <taxon>Brassicaceae</taxon>
        <taxon>Camelineae</taxon>
        <taxon>Arabidopsis</taxon>
    </lineage>
</organism>
<evidence type="ECO:0000255" key="1"/>
<evidence type="ECO:0000269" key="2">
    <source>
    </source>
</evidence>
<evidence type="ECO:0000305" key="3"/>
<evidence type="ECO:0007829" key="4">
    <source>
        <dbReference type="PDB" id="2BRJ"/>
    </source>
</evidence>
<comment type="function">
    <text>Involved in the production of 12-oxo-phytodienoic acid (OPDA), a precursor of jasmonic acid.</text>
</comment>
<comment type="catalytic activity">
    <reaction>
        <text>(9Z,13S,15Z)-12,13-epoxyoctadeca-9,11,15-trienoate = (9S,13S,15Z)-12-oxophyto-10,15-dienoate</text>
        <dbReference type="Rhea" id="RHEA:22592"/>
        <dbReference type="ChEBI" id="CHEBI:36438"/>
        <dbReference type="ChEBI" id="CHEBI:57411"/>
        <dbReference type="EC" id="5.3.99.6"/>
    </reaction>
</comment>
<comment type="subcellular location">
    <subcellularLocation>
        <location evidence="2">Plastid</location>
        <location evidence="2">Chloroplast</location>
    </subcellularLocation>
</comment>
<comment type="tissue specificity">
    <text evidence="2">Highly expressed in fully developed leaves.</text>
</comment>
<comment type="induction">
    <text evidence="2">High local and systemic induction by wounding.</text>
</comment>
<comment type="miscellaneous">
    <text>The four allene oxide cyclase proteins (AOC1, AOC2, AOC3 and AOC4) are encoded by duplicated genes. They are very similar, and most experiments involving antibodies do not discriminate between the different members.</text>
</comment>
<comment type="similarity">
    <text evidence="3">Belongs to the allene oxide cyclase family.</text>
</comment>
<accession>Q9LS02</accession>